<feature type="chain" id="PRO_0000252109" description="Harmonin-binding protein USHBP1">
    <location>
        <begin position="1"/>
        <end position="703"/>
    </location>
</feature>
<feature type="region of interest" description="Disordered" evidence="2">
    <location>
        <begin position="1"/>
        <end position="113"/>
    </location>
</feature>
<feature type="region of interest" description="Disordered" evidence="2">
    <location>
        <begin position="138"/>
        <end position="172"/>
    </location>
</feature>
<feature type="region of interest" description="Disordered" evidence="2">
    <location>
        <begin position="228"/>
        <end position="256"/>
    </location>
</feature>
<feature type="region of interest" description="Disordered" evidence="2">
    <location>
        <begin position="396"/>
        <end position="416"/>
    </location>
</feature>
<feature type="region of interest" description="Disordered" evidence="2">
    <location>
        <begin position="540"/>
        <end position="583"/>
    </location>
</feature>
<feature type="coiled-coil region" evidence="1">
    <location>
        <begin position="189"/>
        <end position="227"/>
    </location>
</feature>
<feature type="coiled-coil region" evidence="1">
    <location>
        <begin position="289"/>
        <end position="309"/>
    </location>
</feature>
<feature type="coiled-coil region" evidence="1">
    <location>
        <begin position="476"/>
        <end position="513"/>
    </location>
</feature>
<feature type="coiled-coil region" evidence="1">
    <location>
        <begin position="596"/>
        <end position="681"/>
    </location>
</feature>
<feature type="compositionally biased region" description="Basic residues" evidence="2">
    <location>
        <begin position="1"/>
        <end position="15"/>
    </location>
</feature>
<feature type="compositionally biased region" description="Polar residues" evidence="2">
    <location>
        <begin position="400"/>
        <end position="410"/>
    </location>
</feature>
<feature type="compositionally biased region" description="Gly residues" evidence="2">
    <location>
        <begin position="572"/>
        <end position="581"/>
    </location>
</feature>
<feature type="splice variant" id="VSP_052080" description="In isoform 2." evidence="6">
    <location>
        <begin position="69"/>
        <end position="703"/>
    </location>
</feature>
<feature type="sequence variant" id="VAR_027753" description="In dbSNP:rs9676419." evidence="3">
    <original>M</original>
    <variation>V</variation>
    <location>
        <position position="439"/>
    </location>
</feature>
<feature type="sequence variant" id="VAR_027754" description="In dbSNP:rs12459398.">
    <original>V</original>
    <variation>M</variation>
    <location>
        <position position="525"/>
    </location>
</feature>
<feature type="sequence variant" id="VAR_051481" description="In dbSNP:rs1043963.">
    <original>A</original>
    <variation>V</variation>
    <location>
        <position position="677"/>
    </location>
</feature>
<feature type="sequence conflict" description="In Ref. 2; BAF84720." evidence="7" ref="2">
    <original>H</original>
    <variation>R</variation>
    <location>
        <position position="233"/>
    </location>
</feature>
<feature type="sequence conflict" description="In Ref. 1; BAB41203." evidence="7" ref="1">
    <original>A</original>
    <variation>T</variation>
    <location>
        <position position="400"/>
    </location>
</feature>
<feature type="sequence conflict" description="In Ref. 1; BAB41203." evidence="7" ref="1">
    <original>T</original>
    <variation>I</variation>
    <location>
        <position position="454"/>
    </location>
</feature>
<feature type="sequence conflict" description="In Ref. 2; BAG37666." evidence="7" ref="2">
    <original>G</original>
    <variation>D</variation>
    <location>
        <position position="572"/>
    </location>
</feature>
<feature type="sequence conflict" description="In Ref. 3; BAC11443." evidence="7" ref="3">
    <original>D</original>
    <variation>G</variation>
    <location>
        <position position="586"/>
    </location>
</feature>
<feature type="sequence conflict" description="In Ref. 3; BAC11443." evidence="7" ref="3">
    <original>N</original>
    <variation>S</variation>
    <location>
        <position position="633"/>
    </location>
</feature>
<organism>
    <name type="scientific">Homo sapiens</name>
    <name type="common">Human</name>
    <dbReference type="NCBI Taxonomy" id="9606"/>
    <lineage>
        <taxon>Eukaryota</taxon>
        <taxon>Metazoa</taxon>
        <taxon>Chordata</taxon>
        <taxon>Craniata</taxon>
        <taxon>Vertebrata</taxon>
        <taxon>Euteleostomi</taxon>
        <taxon>Mammalia</taxon>
        <taxon>Eutheria</taxon>
        <taxon>Euarchontoglires</taxon>
        <taxon>Primates</taxon>
        <taxon>Haplorrhini</taxon>
        <taxon>Catarrhini</taxon>
        <taxon>Hominidae</taxon>
        <taxon>Homo</taxon>
    </lineage>
</organism>
<dbReference type="EMBL" id="AB026290">
    <property type="protein sequence ID" value="BAB41203.1"/>
    <property type="molecule type" value="mRNA"/>
</dbReference>
<dbReference type="EMBL" id="AB040046">
    <property type="protein sequence ID" value="BAB43978.1"/>
    <property type="molecule type" value="mRNA"/>
</dbReference>
<dbReference type="EMBL" id="AK075162">
    <property type="protein sequence ID" value="BAC11443.1"/>
    <property type="status" value="ALT_INIT"/>
    <property type="molecule type" value="mRNA"/>
</dbReference>
<dbReference type="EMBL" id="AK292031">
    <property type="protein sequence ID" value="BAF84720.1"/>
    <property type="molecule type" value="mRNA"/>
</dbReference>
<dbReference type="EMBL" id="AK315239">
    <property type="protein sequence ID" value="BAG37666.1"/>
    <property type="molecule type" value="mRNA"/>
</dbReference>
<dbReference type="EMBL" id="BC027910">
    <property type="protein sequence ID" value="AAH27910.1"/>
    <property type="molecule type" value="mRNA"/>
</dbReference>
<dbReference type="CCDS" id="CCDS12353.1">
    <molecule id="Q8N6Y0-1"/>
</dbReference>
<dbReference type="RefSeq" id="NP_001284632.1">
    <property type="nucleotide sequence ID" value="NM_001297703.1"/>
</dbReference>
<dbReference type="RefSeq" id="NP_001308346.1">
    <molecule id="Q8N6Y0-1"/>
    <property type="nucleotide sequence ID" value="NM_001321417.2"/>
</dbReference>
<dbReference type="RefSeq" id="NP_114147.2">
    <molecule id="Q8N6Y0-1"/>
    <property type="nucleotide sequence ID" value="NM_031941.3"/>
</dbReference>
<dbReference type="SMR" id="Q8N6Y0"/>
<dbReference type="BioGRID" id="123791">
    <property type="interactions" value="254"/>
</dbReference>
<dbReference type="FunCoup" id="Q8N6Y0">
    <property type="interactions" value="37"/>
</dbReference>
<dbReference type="IntAct" id="Q8N6Y0">
    <property type="interactions" value="252"/>
</dbReference>
<dbReference type="MINT" id="Q8N6Y0"/>
<dbReference type="STRING" id="9606.ENSP00000252597"/>
<dbReference type="GlyGen" id="Q8N6Y0">
    <property type="glycosylation" value="1 site"/>
</dbReference>
<dbReference type="iPTMnet" id="Q8N6Y0"/>
<dbReference type="PhosphoSitePlus" id="Q8N6Y0"/>
<dbReference type="BioMuta" id="USHBP1"/>
<dbReference type="DMDM" id="74729194"/>
<dbReference type="jPOST" id="Q8N6Y0"/>
<dbReference type="MassIVE" id="Q8N6Y0"/>
<dbReference type="PaxDb" id="9606-ENSP00000252597"/>
<dbReference type="PeptideAtlas" id="Q8N6Y0"/>
<dbReference type="ProteomicsDB" id="72246">
    <molecule id="Q8N6Y0-1"/>
</dbReference>
<dbReference type="Pumba" id="Q8N6Y0"/>
<dbReference type="Antibodypedia" id="65308">
    <property type="antibodies" value="37 antibodies from 14 providers"/>
</dbReference>
<dbReference type="DNASU" id="83878"/>
<dbReference type="Ensembl" id="ENST00000252597.8">
    <molecule id="Q8N6Y0-1"/>
    <property type="protein sequence ID" value="ENSP00000252597.2"/>
    <property type="gene ID" value="ENSG00000130307.12"/>
</dbReference>
<dbReference type="Ensembl" id="ENST00000597928.5">
    <molecule id="Q8N6Y0-2"/>
    <property type="protein sequence ID" value="ENSP00000469562.1"/>
    <property type="gene ID" value="ENSG00000130307.12"/>
</dbReference>
<dbReference type="GeneID" id="83878"/>
<dbReference type="KEGG" id="hsa:83878"/>
<dbReference type="MANE-Select" id="ENST00000252597.8">
    <property type="protein sequence ID" value="ENSP00000252597.2"/>
    <property type="RefSeq nucleotide sequence ID" value="NM_031941.4"/>
    <property type="RefSeq protein sequence ID" value="NP_114147.2"/>
</dbReference>
<dbReference type="UCSC" id="uc002nfs.2">
    <molecule id="Q8N6Y0-1"/>
    <property type="organism name" value="human"/>
</dbReference>
<dbReference type="AGR" id="HGNC:24058"/>
<dbReference type="CTD" id="83878"/>
<dbReference type="DisGeNET" id="83878"/>
<dbReference type="GeneCards" id="USHBP1"/>
<dbReference type="HGNC" id="HGNC:24058">
    <property type="gene designation" value="USHBP1"/>
</dbReference>
<dbReference type="HPA" id="ENSG00000130307">
    <property type="expression patterns" value="Low tissue specificity"/>
</dbReference>
<dbReference type="MIM" id="611810">
    <property type="type" value="gene"/>
</dbReference>
<dbReference type="neXtProt" id="NX_Q8N6Y0"/>
<dbReference type="OpenTargets" id="ENSG00000130307"/>
<dbReference type="PharmGKB" id="PA134909077"/>
<dbReference type="VEuPathDB" id="HostDB:ENSG00000130307"/>
<dbReference type="eggNOG" id="KOG3512">
    <property type="taxonomic scope" value="Eukaryota"/>
</dbReference>
<dbReference type="GeneTree" id="ENSGT00530000063974"/>
<dbReference type="HOGENOM" id="CLU_024579_0_0_1"/>
<dbReference type="InParanoid" id="Q8N6Y0"/>
<dbReference type="OMA" id="RELCKAH"/>
<dbReference type="OrthoDB" id="6256369at2759"/>
<dbReference type="PAN-GO" id="Q8N6Y0">
    <property type="GO annotations" value="0 GO annotations based on evolutionary models"/>
</dbReference>
<dbReference type="PhylomeDB" id="Q8N6Y0"/>
<dbReference type="TreeFam" id="TF105384"/>
<dbReference type="PathwayCommons" id="Q8N6Y0"/>
<dbReference type="SignaLink" id="Q8N6Y0"/>
<dbReference type="BioGRID-ORCS" id="83878">
    <property type="hits" value="21 hits in 1145 CRISPR screens"/>
</dbReference>
<dbReference type="ChiTaRS" id="USHBP1">
    <property type="organism name" value="human"/>
</dbReference>
<dbReference type="GenomeRNAi" id="83878"/>
<dbReference type="Pharos" id="Q8N6Y0">
    <property type="development level" value="Tbio"/>
</dbReference>
<dbReference type="PRO" id="PR:Q8N6Y0"/>
<dbReference type="Proteomes" id="UP000005640">
    <property type="component" value="Chromosome 19"/>
</dbReference>
<dbReference type="RNAct" id="Q8N6Y0">
    <property type="molecule type" value="protein"/>
</dbReference>
<dbReference type="Bgee" id="ENSG00000130307">
    <property type="expression patterns" value="Expressed in apex of heart and 104 other cell types or tissues"/>
</dbReference>
<dbReference type="ExpressionAtlas" id="Q8N6Y0">
    <property type="expression patterns" value="baseline and differential"/>
</dbReference>
<dbReference type="GO" id="GO:0030165">
    <property type="term" value="F:PDZ domain binding"/>
    <property type="evidence" value="ECO:0000353"/>
    <property type="project" value="HGNC-UCL"/>
</dbReference>
<dbReference type="InterPro" id="IPR040171">
    <property type="entry name" value="USBP1-like"/>
</dbReference>
<dbReference type="InterPro" id="IPR019536">
    <property type="entry name" value="USHBP1_PDZ-bd"/>
</dbReference>
<dbReference type="PANTHER" id="PTHR23347">
    <property type="entry name" value="COLORECTAL MUTANT CANCER PROTEIN MCC PROTEIN -RELATED"/>
    <property type="match status" value="1"/>
</dbReference>
<dbReference type="PANTHER" id="PTHR23347:SF5">
    <property type="entry name" value="HARMONIN-BINDING PROTEIN USHBP1"/>
    <property type="match status" value="1"/>
</dbReference>
<dbReference type="Pfam" id="PF10506">
    <property type="entry name" value="USHBP1_PDZ-bd"/>
    <property type="match status" value="1"/>
</dbReference>
<accession>Q8N6Y0</accession>
<accession>A8K7L6</accession>
<accession>B2RCR9</accession>
<accession>Q8NBX7</accession>
<accession>Q96KH3</accession>
<accession>Q9BYI8</accession>
<proteinExistence type="evidence at protein level"/>
<keyword id="KW-0025">Alternative splicing</keyword>
<keyword id="KW-0175">Coiled coil</keyword>
<keyword id="KW-1267">Proteomics identification</keyword>
<keyword id="KW-1185">Reference proteome</keyword>
<reference evidence="7 9" key="1">
    <citation type="journal article" date="2001" name="Gene">
        <title>Interaction of MCC2, a novel homologue of MCC tumor suppressor, with PDZ-domain protein AIE-75.</title>
        <authorList>
            <person name="Ishikawa S."/>
            <person name="Kobayashi I."/>
            <person name="Hamada J."/>
            <person name="Tada M."/>
            <person name="Hirai A."/>
            <person name="Furuuchi K."/>
            <person name="Takahashi Y."/>
            <person name="Ba Y."/>
            <person name="Moriuchi T."/>
        </authorList>
    </citation>
    <scope>NUCLEOTIDE SEQUENCE [MRNA] (ISOFORMS 1 AND 2)</scope>
    <scope>INTERACTION WITH USH1C</scope>
    <scope>TISSUE SPECIFICITY</scope>
    <scope>VARIANT VAL-439</scope>
    <source>
        <tissue evidence="10">Kidney</tissue>
        <tissue evidence="9">Placenta</tissue>
    </source>
</reference>
<reference evidence="7 11" key="2">
    <citation type="journal article" date="2004" name="Nat. Genet.">
        <title>Complete sequencing and characterization of 21,243 full-length human cDNAs.</title>
        <authorList>
            <person name="Ota T."/>
            <person name="Suzuki Y."/>
            <person name="Nishikawa T."/>
            <person name="Otsuki T."/>
            <person name="Sugiyama T."/>
            <person name="Irie R."/>
            <person name="Wakamatsu A."/>
            <person name="Hayashi K."/>
            <person name="Sato H."/>
            <person name="Nagai K."/>
            <person name="Kimura K."/>
            <person name="Makita H."/>
            <person name="Sekine M."/>
            <person name="Obayashi M."/>
            <person name="Nishi T."/>
            <person name="Shibahara T."/>
            <person name="Tanaka T."/>
            <person name="Ishii S."/>
            <person name="Yamamoto J."/>
            <person name="Saito K."/>
            <person name="Kawai Y."/>
            <person name="Isono Y."/>
            <person name="Nakamura Y."/>
            <person name="Nagahari K."/>
            <person name="Murakami K."/>
            <person name="Yasuda T."/>
            <person name="Iwayanagi T."/>
            <person name="Wagatsuma M."/>
            <person name="Shiratori A."/>
            <person name="Sudo H."/>
            <person name="Hosoiri T."/>
            <person name="Kaku Y."/>
            <person name="Kodaira H."/>
            <person name="Kondo H."/>
            <person name="Sugawara M."/>
            <person name="Takahashi M."/>
            <person name="Kanda K."/>
            <person name="Yokoi T."/>
            <person name="Furuya T."/>
            <person name="Kikkawa E."/>
            <person name="Omura Y."/>
            <person name="Abe K."/>
            <person name="Kamihara K."/>
            <person name="Katsuta N."/>
            <person name="Sato K."/>
            <person name="Tanikawa M."/>
            <person name="Yamazaki M."/>
            <person name="Ninomiya K."/>
            <person name="Ishibashi T."/>
            <person name="Yamashita H."/>
            <person name="Murakawa K."/>
            <person name="Fujimori K."/>
            <person name="Tanai H."/>
            <person name="Kimata M."/>
            <person name="Watanabe M."/>
            <person name="Hiraoka S."/>
            <person name="Chiba Y."/>
            <person name="Ishida S."/>
            <person name="Ono Y."/>
            <person name="Takiguchi S."/>
            <person name="Watanabe S."/>
            <person name="Yosida M."/>
            <person name="Hotuta T."/>
            <person name="Kusano J."/>
            <person name="Kanehori K."/>
            <person name="Takahashi-Fujii A."/>
            <person name="Hara H."/>
            <person name="Tanase T.-O."/>
            <person name="Nomura Y."/>
            <person name="Togiya S."/>
            <person name="Komai F."/>
            <person name="Hara R."/>
            <person name="Takeuchi K."/>
            <person name="Arita M."/>
            <person name="Imose N."/>
            <person name="Musashino K."/>
            <person name="Yuuki H."/>
            <person name="Oshima A."/>
            <person name="Sasaki N."/>
            <person name="Aotsuka S."/>
            <person name="Yoshikawa Y."/>
            <person name="Matsunawa H."/>
            <person name="Ichihara T."/>
            <person name="Shiohata N."/>
            <person name="Sano S."/>
            <person name="Moriya S."/>
            <person name="Momiyama H."/>
            <person name="Satoh N."/>
            <person name="Takami S."/>
            <person name="Terashima Y."/>
            <person name="Suzuki O."/>
            <person name="Nakagawa S."/>
            <person name="Senoh A."/>
            <person name="Mizoguchi H."/>
            <person name="Goto Y."/>
            <person name="Shimizu F."/>
            <person name="Wakebe H."/>
            <person name="Hishigaki H."/>
            <person name="Watanabe T."/>
            <person name="Sugiyama A."/>
            <person name="Takemoto M."/>
            <person name="Kawakami B."/>
            <person name="Yamazaki M."/>
            <person name="Watanabe K."/>
            <person name="Kumagai A."/>
            <person name="Itakura S."/>
            <person name="Fukuzumi Y."/>
            <person name="Fujimori Y."/>
            <person name="Komiyama M."/>
            <person name="Tashiro H."/>
            <person name="Tanigami A."/>
            <person name="Fujiwara T."/>
            <person name="Ono T."/>
            <person name="Yamada K."/>
            <person name="Fujii Y."/>
            <person name="Ozaki K."/>
            <person name="Hirao M."/>
            <person name="Ohmori Y."/>
            <person name="Kawabata A."/>
            <person name="Hikiji T."/>
            <person name="Kobatake N."/>
            <person name="Inagaki H."/>
            <person name="Ikema Y."/>
            <person name="Okamoto S."/>
            <person name="Okitani R."/>
            <person name="Kawakami T."/>
            <person name="Noguchi S."/>
            <person name="Itoh T."/>
            <person name="Shigeta K."/>
            <person name="Senba T."/>
            <person name="Matsumura K."/>
            <person name="Nakajima Y."/>
            <person name="Mizuno T."/>
            <person name="Morinaga M."/>
            <person name="Sasaki M."/>
            <person name="Togashi T."/>
            <person name="Oyama M."/>
            <person name="Hata H."/>
            <person name="Watanabe M."/>
            <person name="Komatsu T."/>
            <person name="Mizushima-Sugano J."/>
            <person name="Satoh T."/>
            <person name="Shirai Y."/>
            <person name="Takahashi Y."/>
            <person name="Nakagawa K."/>
            <person name="Okumura K."/>
            <person name="Nagase T."/>
            <person name="Nomura N."/>
            <person name="Kikuchi H."/>
            <person name="Masuho Y."/>
            <person name="Yamashita R."/>
            <person name="Nakai K."/>
            <person name="Yada T."/>
            <person name="Nakamura Y."/>
            <person name="Ohara O."/>
            <person name="Isogai T."/>
            <person name="Sugano S."/>
        </authorList>
    </citation>
    <scope>NUCLEOTIDE SEQUENCE [LARGE SCALE MRNA] (ISOFORM 1)</scope>
    <source>
        <tissue evidence="11">Placenta</tissue>
        <tissue>Spleen</tissue>
    </source>
</reference>
<reference evidence="7 8" key="3">
    <citation type="journal article" date="2004" name="Genome Res.">
        <title>The status, quality, and expansion of the NIH full-length cDNA project: the Mammalian Gene Collection (MGC).</title>
        <authorList>
            <consortium name="The MGC Project Team"/>
        </authorList>
    </citation>
    <scope>NUCLEOTIDE SEQUENCE [LARGE SCALE MRNA] (ISOFORM 1)</scope>
</reference>
<sequence>MSARATRPRSRRGRHAPPGELDPVAESSEEVEAASGSSKPSFAPPPVSSGLEQLGPMEEVSGQGLGSRTDKKMDGGSGRELASAPEVPHKPAVEAHQAPEAALQYKETVPPGNGAPDVFQTLQHTLSSLEAAAAAWRHQPPSHSGPMEFEGTSEGGAGSLGKQEGAGSCQREAARLAERNAWLRLALSSREDELVRTQASLEAIRAEKETLQKEVQELQDSLLRLEPCPHLSHNQAGGSGSGSSSSEADREPWETQDSFSLAHPLLRRLRSHSSTQILGSLPNQPLSPEMHIMEAQMEQLRGSIEKLKCFNRLLSAVLQGYKGRCEGLSMQLGQREAEATALHLALQYSEHCEEAYRVLLALREADSGAGDEAPMSDLQAAEKEAWRLLAQEEAAMDAGAQQNPQPSPEGSSVDKPTPQEVAFQLRSYVQRLQERRSLMKILSEPGPTLAPMPTVPRAEAMVQAILGTQAGPALPRLEKTQIQQDLVAAREALADLMLRLQLVRREKRGLELREAALRALGPAHVLLLEQLRWERAELQAGGANSSGGHSSGGGSSGDEEEWYQGLPAVPGGTSGIDGGQVGRAWDPEKLAQELAASLTRTLDLQEQLQSLRRELEQVAQKGRARRSQSAELNRDLCKAHSALVLAFRGAHRKQEEQRRKLEQQMALMEAQQAEEVAVLEATARALGKPRPPLPPPQLGDTFL</sequence>
<protein>
    <recommendedName>
        <fullName evidence="7">Harmonin-binding protein USHBP1</fullName>
    </recommendedName>
    <alternativeName>
        <fullName>AIE-75-binding protein</fullName>
    </alternativeName>
    <alternativeName>
        <fullName>Mutated in colon cancer protein 2</fullName>
        <shortName>MCC-2</shortName>
    </alternativeName>
    <alternativeName>
        <fullName>Usher syndrome type-1C protein-binding protein 1</fullName>
        <shortName>USH1C-binding protein 1</shortName>
    </alternativeName>
</protein>
<evidence type="ECO:0000255" key="1"/>
<evidence type="ECO:0000256" key="2">
    <source>
        <dbReference type="SAM" id="MobiDB-lite"/>
    </source>
</evidence>
<evidence type="ECO:0000269" key="3">
    <source>
    </source>
</evidence>
<evidence type="ECO:0000269" key="4">
    <source>
    </source>
</evidence>
<evidence type="ECO:0000269" key="5">
    <source>
    </source>
</evidence>
<evidence type="ECO:0000303" key="6">
    <source>
    </source>
</evidence>
<evidence type="ECO:0000305" key="7"/>
<evidence type="ECO:0000312" key="8">
    <source>
        <dbReference type="EMBL" id="AAH27910.1"/>
    </source>
</evidence>
<evidence type="ECO:0000312" key="9">
    <source>
        <dbReference type="EMBL" id="BAB41203.1"/>
    </source>
</evidence>
<evidence type="ECO:0000312" key="10">
    <source>
        <dbReference type="EMBL" id="BAB43978.1"/>
    </source>
</evidence>
<evidence type="ECO:0000312" key="11">
    <source>
        <dbReference type="EMBL" id="BAC11443.1"/>
    </source>
</evidence>
<gene>
    <name evidence="8" type="primary">USHBP1</name>
    <name evidence="9" type="synonym">AIEBP</name>
    <name type="synonym">MCC2</name>
</gene>
<comment type="subunit">
    <text evidence="3">Interacts via its C-terminus with the first PDZ domain of USH1C.</text>
</comment>
<comment type="interaction">
    <interactant intactId="EBI-739895">
        <id>Q8N6Y0</id>
    </interactant>
    <interactant intactId="EBI-12318443">
        <id>Q8NFV4-4</id>
        <label>ABHD11</label>
    </interactant>
    <organismsDiffer>false</organismsDiffer>
    <experiments>3</experiments>
</comment>
<comment type="interaction">
    <interactant intactId="EBI-739895">
        <id>Q8N6Y0</id>
    </interactant>
    <interactant intactId="EBI-11096309">
        <id>Q9NYB9-2</id>
        <label>ABI2</label>
    </interactant>
    <organismsDiffer>false</organismsDiffer>
    <experiments>3</experiments>
</comment>
<comment type="interaction">
    <interactant intactId="EBI-739895">
        <id>Q8N6Y0</id>
    </interactant>
    <interactant intactId="EBI-12809094">
        <id>Q8TDX5-2</id>
        <label>ACMSD</label>
    </interactant>
    <organismsDiffer>false</organismsDiffer>
    <experiments>3</experiments>
</comment>
<comment type="interaction">
    <interactant intactId="EBI-739895">
        <id>Q8N6Y0</id>
    </interactant>
    <interactant intactId="EBI-8643161">
        <id>Q9NX04</id>
        <label>AIRIM</label>
    </interactant>
    <organismsDiffer>false</organismsDiffer>
    <experiments>3</experiments>
</comment>
<comment type="interaction">
    <interactant intactId="EBI-739895">
        <id>Q8N6Y0</id>
    </interactant>
    <interactant intactId="EBI-9641546">
        <id>Q99996-2</id>
        <label>AKAP9</label>
    </interactant>
    <organismsDiffer>false</organismsDiffer>
    <experiments>3</experiments>
</comment>
<comment type="interaction">
    <interactant intactId="EBI-739895">
        <id>Q8N6Y0</id>
    </interactant>
    <interactant intactId="EBI-16746154">
        <id>Q7Z3H0-1</id>
        <label>ANKRD33</label>
    </interactant>
    <organismsDiffer>false</organismsDiffer>
    <experiments>3</experiments>
</comment>
<comment type="interaction">
    <interactant intactId="EBI-739895">
        <id>Q8N6Y0</id>
    </interactant>
    <interactant intactId="EBI-744859">
        <id>Q96IX9</id>
        <label>ANKRD36BP1</label>
    </interactant>
    <organismsDiffer>false</organismsDiffer>
    <experiments>3</experiments>
</comment>
<comment type="interaction">
    <interactant intactId="EBI-739895">
        <id>Q8N6Y0</id>
    </interactant>
    <interactant intactId="EBI-638194">
        <id>P53365</id>
        <label>ARFIP2</label>
    </interactant>
    <organismsDiffer>false</organismsDiffer>
    <experiments>3</experiments>
</comment>
<comment type="interaction">
    <interactant intactId="EBI-739895">
        <id>Q8N6Y0</id>
    </interactant>
    <interactant intactId="EBI-6425121">
        <id>Q96C12</id>
        <label>ARMC5</label>
    </interactant>
    <organismsDiffer>false</organismsDiffer>
    <experiments>3</experiments>
</comment>
<comment type="interaction">
    <interactant intactId="EBI-739895">
        <id>Q8N6Y0</id>
    </interactant>
    <interactant intactId="EBI-12809012">
        <id>Q8WXK1</id>
        <label>ASB15</label>
    </interactant>
    <organismsDiffer>false</organismsDiffer>
    <experiments>3</experiments>
</comment>
<comment type="interaction">
    <interactant intactId="EBI-739895">
        <id>Q8N6Y0</id>
    </interactant>
    <interactant intactId="EBI-355815">
        <id>P48047</id>
        <label>ATP5PO</label>
    </interactant>
    <organismsDiffer>false</organismsDiffer>
    <experiments>3</experiments>
</comment>
<comment type="interaction">
    <interactant intactId="EBI-739895">
        <id>Q8N6Y0</id>
    </interactant>
    <interactant intactId="EBI-1050106">
        <id>O75934</id>
        <label>BCAS2</label>
    </interactant>
    <organismsDiffer>false</organismsDiffer>
    <experiments>3</experiments>
</comment>
<comment type="interaction">
    <interactant intactId="EBI-739895">
        <id>Q8N6Y0</id>
    </interactant>
    <interactant intactId="EBI-526406">
        <id>O43521</id>
        <label>BCL2L11</label>
    </interactant>
    <organismsDiffer>false</organismsDiffer>
    <experiments>3</experiments>
</comment>
<comment type="interaction">
    <interactant intactId="EBI-739895">
        <id>Q8N6Y0</id>
    </interactant>
    <interactant intactId="EBI-749204">
        <id>O15155</id>
        <label>BET1</label>
    </interactant>
    <organismsDiffer>false</organismsDiffer>
    <experiments>2</experiments>
</comment>
<comment type="interaction">
    <interactant intactId="EBI-739895">
        <id>Q8N6Y0</id>
    </interactant>
    <interactant intactId="EBI-745073">
        <id>Q9BXY8</id>
        <label>BEX2</label>
    </interactant>
    <organismsDiffer>false</organismsDiffer>
    <experiments>3</experiments>
</comment>
<comment type="interaction">
    <interactant intactId="EBI-739895">
        <id>Q8N6Y0</id>
    </interactant>
    <interactant intactId="EBI-741753">
        <id>Q00994</id>
        <label>BEX3</label>
    </interactant>
    <organismsDiffer>false</organismsDiffer>
    <experiments>6</experiments>
</comment>
<comment type="interaction">
    <interactant intactId="EBI-739895">
        <id>Q8N6Y0</id>
    </interactant>
    <interactant intactId="EBI-12123320">
        <id>Q12934-2</id>
        <label>BFSP1</label>
    </interactant>
    <organismsDiffer>false</organismsDiffer>
    <experiments>3</experiments>
</comment>
<comment type="interaction">
    <interactant intactId="EBI-739895">
        <id>Q8N6Y0</id>
    </interactant>
    <interactant intactId="EBI-10229433">
        <id>Q13515</id>
        <label>BFSP2</label>
    </interactant>
    <organismsDiffer>false</organismsDiffer>
    <experiments>6</experiments>
</comment>
<comment type="interaction">
    <interactant intactId="EBI-739895">
        <id>Q8N6Y0</id>
    </interactant>
    <interactant intactId="EBI-1012434">
        <id>Q6AI39</id>
        <label>BICRAL</label>
    </interactant>
    <organismsDiffer>false</organismsDiffer>
    <experiments>3</experiments>
</comment>
<comment type="interaction">
    <interactant intactId="EBI-739895">
        <id>Q8N6Y0</id>
    </interactant>
    <interactant intactId="EBI-348630">
        <id>P78537</id>
        <label>BLOC1S1</label>
    </interactant>
    <organismsDiffer>false</organismsDiffer>
    <experiments>3</experiments>
</comment>
<comment type="interaction">
    <interactant intactId="EBI-739895">
        <id>Q8N6Y0</id>
    </interactant>
    <interactant intactId="EBI-2548012">
        <id>Q9H2G9</id>
        <label>BLZF1</label>
    </interactant>
    <organismsDiffer>false</organismsDiffer>
    <experiments>3</experiments>
</comment>
<comment type="interaction">
    <interactant intactId="EBI-739895">
        <id>Q8N6Y0</id>
    </interactant>
    <interactant intactId="EBI-10193358">
        <id>Q96GS4</id>
        <label>BORCS6</label>
    </interactant>
    <organismsDiffer>false</organismsDiffer>
    <experiments>3</experiments>
</comment>
<comment type="interaction">
    <interactant intactId="EBI-739895">
        <id>Q8N6Y0</id>
    </interactant>
    <interactant intactId="EBI-10826195">
        <id>Q6PJG6</id>
        <label>BRAT1</label>
    </interactant>
    <organismsDiffer>false</organismsDiffer>
    <experiments>3</experiments>
</comment>
<comment type="interaction">
    <interactant intactId="EBI-739895">
        <id>Q8N6Y0</id>
    </interactant>
    <interactant intactId="EBI-12065306">
        <id>P55201-2</id>
        <label>BRPF1</label>
    </interactant>
    <organismsDiffer>false</organismsDiffer>
    <experiments>3</experiments>
</comment>
<comment type="interaction">
    <interactant intactId="EBI-739895">
        <id>Q8N6Y0</id>
    </interactant>
    <interactant intactId="EBI-747505">
        <id>Q8TAB5</id>
        <label>C1orf216</label>
    </interactant>
    <organismsDiffer>false</organismsDiffer>
    <experiments>7</experiments>
</comment>
<comment type="interaction">
    <interactant intactId="EBI-739895">
        <id>Q8N6Y0</id>
    </interactant>
    <interactant intactId="EBI-10226774">
        <id>Q0VAL7</id>
        <label>C21orf58</label>
    </interactant>
    <organismsDiffer>false</organismsDiffer>
    <experiments>3</experiments>
</comment>
<comment type="interaction">
    <interactant intactId="EBI-739895">
        <id>Q8N6Y0</id>
    </interactant>
    <interactant intactId="EBI-11524851">
        <id>Q8NA61-2</id>
        <label>CBY2</label>
    </interactant>
    <organismsDiffer>false</organismsDiffer>
    <experiments>3</experiments>
</comment>
<comment type="interaction">
    <interactant intactId="EBI-739895">
        <id>Q8N6Y0</id>
    </interactant>
    <interactant intactId="EBI-10261970">
        <id>Q8IW40</id>
        <label>CCDC103</label>
    </interactant>
    <organismsDiffer>false</organismsDiffer>
    <experiments>3</experiments>
</comment>
<comment type="interaction">
    <interactant intactId="EBI-739895">
        <id>Q8N6Y0</id>
    </interactant>
    <interactant intactId="EBI-744311">
        <id>Q8IYX3</id>
        <label>CCDC116</label>
    </interactant>
    <organismsDiffer>false</organismsDiffer>
    <experiments>6</experiments>
</comment>
<comment type="interaction">
    <interactant intactId="EBI-739895">
        <id>Q8N6Y0</id>
    </interactant>
    <interactant intactId="EBI-10185348">
        <id>Q96HB5-4</id>
        <label>CCDC120</label>
    </interactant>
    <organismsDiffer>false</organismsDiffer>
    <experiments>3</experiments>
</comment>
<comment type="interaction">
    <interactant intactId="EBI-739895">
        <id>Q8N6Y0</id>
    </interactant>
    <interactant intactId="EBI-2836982">
        <id>Q6ZUS5</id>
        <label>CCDC121</label>
    </interactant>
    <organismsDiffer>false</organismsDiffer>
    <experiments>3</experiments>
</comment>
<comment type="interaction">
    <interactant intactId="EBI-739895">
        <id>Q8N6Y0</id>
    </interactant>
    <interactant intactId="EBI-10749669">
        <id>Q8IYE0</id>
        <label>CCDC146</label>
    </interactant>
    <organismsDiffer>false</organismsDiffer>
    <experiments>3</experiments>
</comment>
<comment type="interaction">
    <interactant intactId="EBI-739895">
        <id>Q8N6Y0</id>
    </interactant>
    <interactant intactId="EBI-10247802">
        <id>Q8IYE0-2</id>
        <label>CCDC146</label>
    </interactant>
    <organismsDiffer>false</organismsDiffer>
    <experiments>3</experiments>
</comment>
<comment type="interaction">
    <interactant intactId="EBI-739895">
        <id>Q8N6Y0</id>
    </interactant>
    <interactant intactId="EBI-2349862">
        <id>Q8NFR7</id>
        <label>CCDC148</label>
    </interactant>
    <organismsDiffer>false</organismsDiffer>
    <experiments>3</experiments>
</comment>
<comment type="interaction">
    <interactant intactId="EBI-739895">
        <id>Q8N6Y0</id>
    </interactant>
    <interactant intactId="EBI-10181422">
        <id>A0A1B0GWI1</id>
        <label>CCDC196</label>
    </interactant>
    <organismsDiffer>false</organismsDiffer>
    <experiments>3</experiments>
</comment>
<comment type="interaction">
    <interactant intactId="EBI-739895">
        <id>Q8N6Y0</id>
    </interactant>
    <interactant intactId="EBI-750686">
        <id>Q8NCU1</id>
        <label>CCDC197</label>
    </interactant>
    <organismsDiffer>false</organismsDiffer>
    <experiments>3</experiments>
</comment>
<comment type="interaction">
    <interactant intactId="EBI-739895">
        <id>Q8N6Y0</id>
    </interactant>
    <interactant intactId="EBI-3943153">
        <id>O60826</id>
        <label>CCDC22</label>
    </interactant>
    <organismsDiffer>false</organismsDiffer>
    <experiments>3</experiments>
</comment>
<comment type="interaction">
    <interactant intactId="EBI-739895">
        <id>Q8N6Y0</id>
    </interactant>
    <interactant intactId="EBI-1104933">
        <id>Q8N4L8</id>
        <label>CCDC24</label>
    </interactant>
    <organismsDiffer>false</organismsDiffer>
    <experiments>6</experiments>
</comment>
<comment type="interaction">
    <interactant intactId="EBI-739895">
        <id>Q8N6Y0</id>
    </interactant>
    <interactant intactId="EBI-10258115">
        <id>Q7Z6N9</id>
        <label>CCDC28A</label>
    </interactant>
    <organismsDiffer>false</organismsDiffer>
    <experiments>3</experiments>
</comment>
<comment type="interaction">
    <interactant intactId="EBI-739895">
        <id>Q8N6Y0</id>
    </interactant>
    <interactant intactId="EBI-11750401">
        <id>Q96M95-2</id>
        <label>CCDC42</label>
    </interactant>
    <organismsDiffer>false</organismsDiffer>
    <experiments>3</experiments>
</comment>
<comment type="interaction">
    <interactant intactId="EBI-739895">
        <id>Q8N6Y0</id>
    </interactant>
    <interactant intactId="EBI-749261">
        <id>Q9NVE4</id>
        <label>CCDC87</label>
    </interactant>
    <organismsDiffer>false</organismsDiffer>
    <experiments>3</experiments>
</comment>
<comment type="interaction">
    <interactant intactId="EBI-739895">
        <id>Q8N6Y0</id>
    </interactant>
    <interactant intactId="EBI-10175300">
        <id>Q8TD31-3</id>
        <label>CCHCR1</label>
    </interactant>
    <organismsDiffer>false</organismsDiffer>
    <experiments>6</experiments>
</comment>
<comment type="interaction">
    <interactant intactId="EBI-739895">
        <id>Q8N6Y0</id>
    </interactant>
    <interactant intactId="EBI-295634">
        <id>Q16543</id>
        <label>CDC37</label>
    </interactant>
    <organismsDiffer>false</organismsDiffer>
    <experiments>3</experiments>
</comment>
<comment type="interaction">
    <interactant intactId="EBI-739895">
        <id>Q8N6Y0</id>
    </interactant>
    <interactant intactId="EBI-374880">
        <id>Q99459</id>
        <label>CDC5L</label>
    </interactant>
    <organismsDiffer>false</organismsDiffer>
    <experiments>3</experiments>
</comment>
<comment type="interaction">
    <interactant intactId="EBI-739895">
        <id>Q8N6Y0</id>
    </interactant>
    <interactant intactId="EBI-375077">
        <id>P38936</id>
        <label>CDKN1A</label>
    </interactant>
    <organismsDiffer>false</organismsDiffer>
    <experiments>3</experiments>
</comment>
<comment type="interaction">
    <interactant intactId="EBI-739895">
        <id>Q8N6Y0</id>
    </interactant>
    <interactant intactId="EBI-10250303">
        <id>Q6IPU0</id>
        <label>CENPP</label>
    </interactant>
    <organismsDiffer>false</organismsDiffer>
    <experiments>6</experiments>
</comment>
<comment type="interaction">
    <interactant intactId="EBI-739895">
        <id>Q8N6Y0</id>
    </interactant>
    <interactant intactId="EBI-11522539">
        <id>Q96MT8-3</id>
        <label>CEP63</label>
    </interactant>
    <organismsDiffer>false</organismsDiffer>
    <experiments>5</experiments>
</comment>
<comment type="interaction">
    <interactant intactId="EBI-739895">
        <id>Q8N6Y0</id>
    </interactant>
    <interactant intactId="EBI-9051024">
        <id>Q76N32</id>
        <label>CEP68</label>
    </interactant>
    <organismsDiffer>false</organismsDiffer>
    <experiments>3</experiments>
</comment>
<comment type="interaction">
    <interactant intactId="EBI-739895">
        <id>Q8N6Y0</id>
    </interactant>
    <interactant intactId="EBI-11975967">
        <id>Q76N32-2</id>
        <label>CEP68</label>
    </interactant>
    <organismsDiffer>false</organismsDiffer>
    <experiments>3</experiments>
</comment>
<comment type="interaction">
    <interactant intactId="EBI-739895">
        <id>Q8N6Y0</id>
    </interactant>
    <interactant intactId="EBI-749051">
        <id>Q8IYR0</id>
        <label>CFAP206</label>
    </interactant>
    <organismsDiffer>false</organismsDiffer>
    <experiments>3</experiments>
</comment>
<comment type="interaction">
    <interactant intactId="EBI-739895">
        <id>Q8N6Y0</id>
    </interactant>
    <interactant intactId="EBI-741032">
        <id>Q8NE01</id>
        <label>CNNM3</label>
    </interactant>
    <organismsDiffer>false</organismsDiffer>
    <experiments>3</experiments>
</comment>
<comment type="interaction">
    <interactant intactId="EBI-739895">
        <id>Q8N6Y0</id>
    </interactant>
    <interactant intactId="EBI-10269984">
        <id>Q8NE01-3</id>
        <label>CNNM3</label>
    </interactant>
    <organismsDiffer>false</organismsDiffer>
    <experiments>3</experiments>
</comment>
<comment type="interaction">
    <interactant intactId="EBI-739895">
        <id>Q8N6Y0</id>
    </interactant>
    <interactant intactId="EBI-742413">
        <id>Q9BT78</id>
        <label>COPS4</label>
    </interactant>
    <organismsDiffer>false</organismsDiffer>
    <experiments>7</experiments>
</comment>
<comment type="interaction">
    <interactant intactId="EBI-739895">
        <id>Q8N6Y0</id>
    </interactant>
    <interactant intactId="EBI-486838">
        <id>Q7L5N1</id>
        <label>COPS6</label>
    </interactant>
    <organismsDiffer>false</organismsDiffer>
    <experiments>3</experiments>
</comment>
<comment type="interaction">
    <interactant intactId="EBI-739895">
        <id>Q8N6Y0</id>
    </interactant>
    <interactant intactId="EBI-2510102">
        <id>Q99627</id>
        <label>COPS8</label>
    </interactant>
    <organismsDiffer>false</organismsDiffer>
    <experiments>3</experiments>
</comment>
<comment type="interaction">
    <interactant intactId="EBI-739895">
        <id>Q8N6Y0</id>
    </interactant>
    <interactant intactId="EBI-11962928">
        <id>Q9UI47-2</id>
        <label>CTNNA3</label>
    </interactant>
    <organismsDiffer>false</organismsDiffer>
    <experiments>3</experiments>
</comment>
<comment type="interaction">
    <interactant intactId="EBI-739895">
        <id>Q8N6Y0</id>
    </interactant>
    <interactant intactId="EBI-747082">
        <id>Q9NSA3</id>
        <label>CTNNBIP1</label>
    </interactant>
    <organismsDiffer>false</organismsDiffer>
    <experiments>3</experiments>
</comment>
<comment type="interaction">
    <interactant intactId="EBI-739895">
        <id>Q8N6Y0</id>
    </interactant>
    <interactant intactId="EBI-1774273">
        <id>Q9P2B4</id>
        <label>CTTNBP2NL</label>
    </interactant>
    <organismsDiffer>false</organismsDiffer>
    <experiments>3</experiments>
</comment>
<comment type="interaction">
    <interactant intactId="EBI-739895">
        <id>Q8N6Y0</id>
    </interactant>
    <interactant intactId="EBI-11521003">
        <id>Q9UIA0</id>
        <label>CYTH4</label>
    </interactant>
    <organismsDiffer>false</organismsDiffer>
    <experiments>3</experiments>
</comment>
<comment type="interaction">
    <interactant intactId="EBI-739895">
        <id>Q8N6Y0</id>
    </interactant>
    <interactant intactId="EBI-715074">
        <id>Q13561</id>
        <label>DCTN2</label>
    </interactant>
    <organismsDiffer>false</organismsDiffer>
    <experiments>3</experiments>
</comment>
<comment type="interaction">
    <interactant intactId="EBI-739895">
        <id>Q8N6Y0</id>
    </interactant>
    <interactant intactId="EBI-12091947">
        <id>O75935-2</id>
        <label>DCTN3</label>
    </interactant>
    <organismsDiffer>false</organismsDiffer>
    <experiments>3</experiments>
</comment>
<comment type="interaction">
    <interactant intactId="EBI-739895">
        <id>Q8N6Y0</id>
    </interactant>
    <interactant intactId="EBI-748597">
        <id>Q05D60</id>
        <label>DEUP1</label>
    </interactant>
    <organismsDiffer>false</organismsDiffer>
    <experiments>3</experiments>
</comment>
<comment type="interaction">
    <interactant intactId="EBI-739895">
        <id>Q8N6Y0</id>
    </interactant>
    <interactant intactId="EBI-740402">
        <id>O60941</id>
        <label>DTNB</label>
    </interactant>
    <organismsDiffer>false</organismsDiffer>
    <experiments>3</experiments>
</comment>
<comment type="interaction">
    <interactant intactId="EBI-739895">
        <id>Q8N6Y0</id>
    </interactant>
    <interactant intactId="EBI-11984733">
        <id>O60941-5</id>
        <label>DTNB</label>
    </interactant>
    <organismsDiffer>false</organismsDiffer>
    <experiments>3</experiments>
</comment>
<comment type="interaction">
    <interactant intactId="EBI-739895">
        <id>Q8N6Y0</id>
    </interactant>
    <interactant intactId="EBI-740680">
        <id>Q8WWB3</id>
        <label>DYDC1</label>
    </interactant>
    <organismsDiffer>false</organismsDiffer>
    <experiments>7</experiments>
</comment>
<comment type="interaction">
    <interactant intactId="EBI-739895">
        <id>Q8N6Y0</id>
    </interactant>
    <interactant intactId="EBI-398610">
        <id>O60573</id>
        <label>EIF4E2</label>
    </interactant>
    <organismsDiffer>false</organismsDiffer>
    <experiments>3</experiments>
</comment>
<comment type="interaction">
    <interactant intactId="EBI-739895">
        <id>Q8N6Y0</id>
    </interactant>
    <interactant intactId="EBI-744099">
        <id>Q9H0I2</id>
        <label>ENKD1</label>
    </interactant>
    <organismsDiffer>false</organismsDiffer>
    <experiments>3</experiments>
</comment>
<comment type="interaction">
    <interactant intactId="EBI-739895">
        <id>Q8N6Y0</id>
    </interactant>
    <interactant intactId="EBI-750962">
        <id>P07992</id>
        <label>ERCC1</label>
    </interactant>
    <organismsDiffer>false</organismsDiffer>
    <experiments>3</experiments>
</comment>
<comment type="interaction">
    <interactant intactId="EBI-739895">
        <id>Q8N6Y0</id>
    </interactant>
    <interactant intactId="EBI-6251402">
        <id>Q9UPT5-1</id>
        <label>EXOC7</label>
    </interactant>
    <organismsDiffer>false</organismsDiffer>
    <experiments>3</experiments>
</comment>
<comment type="interaction">
    <interactant intactId="EBI-739895">
        <id>Q8N6Y0</id>
    </interactant>
    <interactant intactId="EBI-742102">
        <id>Q8IYI6</id>
        <label>EXOC8</label>
    </interactant>
    <organismsDiffer>false</organismsDiffer>
    <experiments>5</experiments>
</comment>
<comment type="interaction">
    <interactant intactId="EBI-739895">
        <id>Q8N6Y0</id>
    </interactant>
    <interactant intactId="EBI-10192902">
        <id>O95990-3</id>
        <label>FAM107A</label>
    </interactant>
    <organismsDiffer>false</organismsDiffer>
    <experiments>3</experiments>
</comment>
<comment type="interaction">
    <interactant intactId="EBI-739895">
        <id>Q8N6Y0</id>
    </interactant>
    <interactant intactId="EBI-1752811">
        <id>Q9BQ89</id>
        <label>FAM110A</label>
    </interactant>
    <organismsDiffer>false</organismsDiffer>
    <experiments>6</experiments>
</comment>
<comment type="interaction">
    <interactant intactId="EBI-739895">
        <id>Q8N6Y0</id>
    </interactant>
    <interactant intactId="EBI-741626">
        <id>Q9H5Z6</id>
        <label>FAM124B</label>
    </interactant>
    <organismsDiffer>false</organismsDiffer>
    <experiments>3</experiments>
</comment>
<comment type="interaction">
    <interactant intactId="EBI-739895">
        <id>Q8N6Y0</id>
    </interactant>
    <interactant intactId="EBI-7225287">
        <id>Q96MY7</id>
        <label>FAM161B</label>
    </interactant>
    <organismsDiffer>false</organismsDiffer>
    <experiments>3</experiments>
</comment>
<comment type="interaction">
    <interactant intactId="EBI-739895">
        <id>Q8N6Y0</id>
    </interactant>
    <interactant intactId="EBI-16438045">
        <id>A0A0S2Z3R2</id>
        <label>FANCG</label>
    </interactant>
    <organismsDiffer>false</organismsDiffer>
    <experiments>3</experiments>
</comment>
<comment type="interaction">
    <interactant intactId="EBI-739895">
        <id>Q8N6Y0</id>
    </interactant>
    <interactant intactId="EBI-10244131">
        <id>Q8TES7-6</id>
        <label>FBF1</label>
    </interactant>
    <organismsDiffer>false</organismsDiffer>
    <experiments>3</experiments>
</comment>
<comment type="interaction">
    <interactant intactId="EBI-739895">
        <id>Q8N6Y0</id>
    </interactant>
    <interactant intactId="EBI-11958845">
        <id>O94868-3</id>
        <label>FCHSD2</label>
    </interactant>
    <organismsDiffer>false</organismsDiffer>
    <experiments>3</experiments>
</comment>
<comment type="interaction">
    <interactant intactId="EBI-739895">
        <id>Q8N6Y0</id>
    </interactant>
    <interactant intactId="EBI-12091825">
        <id>Q96RD9</id>
        <label>FCRL5</label>
    </interactant>
    <organismsDiffer>false</organismsDiffer>
    <experiments>3</experiments>
</comment>
<comment type="interaction">
    <interactant intactId="EBI-739895">
        <id>Q8N6Y0</id>
    </interactant>
    <interactant intactId="EBI-713279">
        <id>P02792</id>
        <label>FTL</label>
    </interactant>
    <organismsDiffer>false</organismsDiffer>
    <experiments>3</experiments>
</comment>
<comment type="interaction">
    <interactant intactId="EBI-739895">
        <id>Q8N6Y0</id>
    </interactant>
    <interactant intactId="EBI-1052570">
        <id>O95995</id>
        <label>GAS8</label>
    </interactant>
    <organismsDiffer>false</organismsDiffer>
    <experiments>3</experiments>
</comment>
<comment type="interaction">
    <interactant intactId="EBI-739895">
        <id>Q8N6Y0</id>
    </interactant>
    <interactant intactId="EBI-923440">
        <id>Q8WXI9</id>
        <label>GATAD2B</label>
    </interactant>
    <organismsDiffer>false</organismsDiffer>
    <experiments>3</experiments>
</comment>
<comment type="interaction">
    <interactant intactId="EBI-739895">
        <id>Q8N6Y0</id>
    </interactant>
    <interactant intactId="EBI-744104">
        <id>P55040</id>
        <label>GEM</label>
    </interactant>
    <organismsDiffer>false</organismsDiffer>
    <experiments>3</experiments>
</comment>
<comment type="interaction">
    <interactant intactId="EBI-739895">
        <id>Q8N6Y0</id>
    </interactant>
    <interactant intactId="EBI-745707">
        <id>Q8NEA9</id>
        <label>GMCL2</label>
    </interactant>
    <organismsDiffer>false</organismsDiffer>
    <experiments>3</experiments>
</comment>
<comment type="interaction">
    <interactant intactId="EBI-739895">
        <id>Q8N6Y0</id>
    </interactant>
    <interactant intactId="EBI-10175453">
        <id>B1APZ0</id>
        <label>GNG4</label>
    </interactant>
    <organismsDiffer>false</organismsDiffer>
    <experiments>3</experiments>
</comment>
<comment type="interaction">
    <interactant intactId="EBI-739895">
        <id>Q8N6Y0</id>
    </interactant>
    <interactant intactId="EBI-5916454">
        <id>A6NEM1</id>
        <label>GOLGA6L9</label>
    </interactant>
    <organismsDiffer>false</organismsDiffer>
    <experiments>3</experiments>
</comment>
<comment type="interaction">
    <interactant intactId="EBI-739895">
        <id>Q8N6Y0</id>
    </interactant>
    <interactant intactId="EBI-10181276">
        <id>Q0D2H9</id>
        <label>GOLGA8DP</label>
    </interactant>
    <organismsDiffer>false</organismsDiffer>
    <experiments>3</experiments>
</comment>
<comment type="interaction">
    <interactant intactId="EBI-739895">
        <id>Q8N6Y0</id>
    </interactant>
    <interactant intactId="EBI-10181260">
        <id>Q08AF8</id>
        <label>GOLGA8G</label>
    </interactant>
    <organismsDiffer>false</organismsDiffer>
    <experiments>3</experiments>
</comment>
<comment type="interaction">
    <interactant intactId="EBI-739895">
        <id>Q8N6Y0</id>
    </interactant>
    <interactant intactId="EBI-347538">
        <id>Q9Y4H4</id>
        <label>GPSM3</label>
    </interactant>
    <organismsDiffer>false</organismsDiffer>
    <experiments>3</experiments>
</comment>
<comment type="interaction">
    <interactant intactId="EBI-739895">
        <id>Q8N6Y0</id>
    </interactant>
    <interactant intactId="EBI-2514791">
        <id>Q96CS2</id>
        <label>HAUS1</label>
    </interactant>
    <organismsDiffer>false</organismsDiffer>
    <experiments>3</experiments>
</comment>
<comment type="interaction">
    <interactant intactId="EBI-739895">
        <id>Q8N6Y0</id>
    </interactant>
    <interactant intactId="EBI-2558143">
        <id>Q9BT25</id>
        <label>HAUS8</label>
    </interactant>
    <organismsDiffer>false</organismsDiffer>
    <experiments>3</experiments>
</comment>
<comment type="interaction">
    <interactant intactId="EBI-739895">
        <id>Q8N6Y0</id>
    </interactant>
    <interactant intactId="EBI-740220">
        <id>O14964</id>
        <label>HGS</label>
    </interactant>
    <organismsDiffer>false</organismsDiffer>
    <experiments>4</experiments>
</comment>
<comment type="interaction">
    <interactant intactId="EBI-739895">
        <id>Q8N6Y0</id>
    </interactant>
    <interactant intactId="EBI-740641">
        <id>Q9NP66</id>
        <label>HMG20A</label>
    </interactant>
    <organismsDiffer>false</organismsDiffer>
    <experiments>3</experiments>
</comment>
<comment type="interaction">
    <interactant intactId="EBI-739895">
        <id>Q8N6Y0</id>
    </interactant>
    <interactant intactId="EBI-713401">
        <id>Q9P0W2</id>
        <label>HMG20B</label>
    </interactant>
    <organismsDiffer>false</organismsDiffer>
    <experiments>3</experiments>
</comment>
<comment type="interaction">
    <interactant intactId="EBI-739895">
        <id>Q8N6Y0</id>
    </interactant>
    <interactant intactId="EBI-744203">
        <id>Q8IY31</id>
        <label>IFT20</label>
    </interactant>
    <organismsDiffer>false</organismsDiffer>
    <experiments>3</experiments>
</comment>
<comment type="interaction">
    <interactant intactId="EBI-739895">
        <id>Q8N6Y0</id>
    </interactant>
    <interactant intactId="EBI-17178971">
        <id>Q14005-2</id>
        <label>IL16</label>
    </interactant>
    <organismsDiffer>false</organismsDiffer>
    <experiments>3</experiments>
</comment>
<comment type="interaction">
    <interactant intactId="EBI-739895">
        <id>Q8N6Y0</id>
    </interactant>
    <interactant intactId="EBI-747481">
        <id>Q9NV31</id>
        <label>IMP3</label>
    </interactant>
    <organismsDiffer>false</organismsDiffer>
    <experiments>6</experiments>
</comment>
<comment type="interaction">
    <interactant intactId="EBI-739895">
        <id>Q8N6Y0</id>
    </interactant>
    <interactant intactId="EBI-10263367">
        <id>A0A0C4DG38</id>
        <label>ING3</label>
    </interactant>
    <organismsDiffer>false</organismsDiffer>
    <experiments>3</experiments>
</comment>
<comment type="interaction">
    <interactant intactId="EBI-739895">
        <id>Q8N6Y0</id>
    </interactant>
    <interactant intactId="EBI-5663129">
        <id>Q96HW7</id>
        <label>INTS4</label>
    </interactant>
    <organismsDiffer>false</organismsDiffer>
    <experiments>3</experiments>
</comment>
<comment type="interaction">
    <interactant intactId="EBI-739895">
        <id>Q8N6Y0</id>
    </interactant>
    <interactant intactId="EBI-712105">
        <id>Q13352</id>
        <label>ITGB3BP</label>
    </interactant>
    <organismsDiffer>false</organismsDiffer>
    <experiments>3</experiments>
</comment>
<comment type="interaction">
    <interactant intactId="EBI-739895">
        <id>Q8N6Y0</id>
    </interactant>
    <interactant intactId="EBI-2556193">
        <id>Q63ZY3</id>
        <label>KANK2</label>
    </interactant>
    <organismsDiffer>false</organismsDiffer>
    <experiments>3</experiments>
</comment>
<comment type="interaction">
    <interactant intactId="EBI-739895">
        <id>Q8N6Y0</id>
    </interactant>
    <interactant intactId="EBI-2805604">
        <id>Q2KHM9</id>
        <label>KIAA0753</label>
    </interactant>
    <organismsDiffer>false</organismsDiffer>
    <experiments>3</experiments>
</comment>
<comment type="interaction">
    <interactant intactId="EBI-739895">
        <id>Q8N6Y0</id>
    </interactant>
    <interactant intactId="EBI-12076930">
        <id>Q6P597-3</id>
        <label>KLC3</label>
    </interactant>
    <organismsDiffer>false</organismsDiffer>
    <experiments>3</experiments>
</comment>
<comment type="interaction">
    <interactant intactId="EBI-739895">
        <id>Q8N6Y0</id>
    </interactant>
    <interactant intactId="EBI-949319">
        <id>Q9NSK0</id>
        <label>KLC4</label>
    </interactant>
    <organismsDiffer>false</organismsDiffer>
    <experiments>3</experiments>
</comment>
<comment type="interaction">
    <interactant intactId="EBI-739895">
        <id>Q8N6Y0</id>
    </interactant>
    <interactant intactId="EBI-6426443">
        <id>Q2WGJ6</id>
        <label>KLHL38</label>
    </interactant>
    <organismsDiffer>false</organismsDiffer>
    <experiments>6</experiments>
</comment>
<comment type="interaction">
    <interactant intactId="EBI-739895">
        <id>Q8N6Y0</id>
    </interactant>
    <interactant intactId="EBI-349938">
        <id>P52292</id>
        <label>KPNA2</label>
    </interactant>
    <organismsDiffer>false</organismsDiffer>
    <experiments>3</experiments>
</comment>
<comment type="interaction">
    <interactant intactId="EBI-739895">
        <id>Q8N6Y0</id>
    </interactant>
    <interactant intactId="EBI-702178">
        <id>P02533</id>
        <label>KRT14</label>
    </interactant>
    <organismsDiffer>false</organismsDiffer>
    <experiments>3</experiments>
</comment>
<comment type="interaction">
    <interactant intactId="EBI-739895">
        <id>Q8N6Y0</id>
    </interactant>
    <interactant intactId="EBI-356410">
        <id>P08779</id>
        <label>KRT16</label>
    </interactant>
    <organismsDiffer>false</organismsDiffer>
    <experiments>3</experiments>
</comment>
<comment type="interaction">
    <interactant intactId="EBI-739895">
        <id>Q8N6Y0</id>
    </interactant>
    <interactant intactId="EBI-742094">
        <id>P35900</id>
        <label>KRT20</label>
    </interactant>
    <organismsDiffer>false</organismsDiffer>
    <experiments>3</experiments>
</comment>
<comment type="interaction">
    <interactant intactId="EBI-739895">
        <id>Q8N6Y0</id>
    </interactant>
    <interactant intactId="EBI-12084444">
        <id>Q7Z3Y9</id>
        <label>KRT26</label>
    </interactant>
    <organismsDiffer>false</organismsDiffer>
    <experiments>3</experiments>
</comment>
<comment type="interaction">
    <interactant intactId="EBI-739895">
        <id>Q8N6Y0</id>
    </interactant>
    <interactant intactId="EBI-3044087">
        <id>Q7Z3Y8</id>
        <label>KRT27</label>
    </interactant>
    <organismsDiffer>false</organismsDiffer>
    <experiments>3</experiments>
</comment>
<comment type="interaction">
    <interactant intactId="EBI-739895">
        <id>Q8N6Y0</id>
    </interactant>
    <interactant intactId="EBI-11980489">
        <id>Q7Z3Y7</id>
        <label>KRT28</label>
    </interactant>
    <organismsDiffer>false</organismsDiffer>
    <experiments>3</experiments>
</comment>
<comment type="interaction">
    <interactant intactId="EBI-739895">
        <id>Q8N6Y0</id>
    </interactant>
    <interactant intactId="EBI-948001">
        <id>Q15323</id>
        <label>KRT31</label>
    </interactant>
    <organismsDiffer>false</organismsDiffer>
    <experiments>3</experiments>
</comment>
<comment type="interaction">
    <interactant intactId="EBI-739895">
        <id>Q8N6Y0</id>
    </interactant>
    <interactant intactId="EBI-1045716">
        <id>O76014</id>
        <label>KRT37</label>
    </interactant>
    <organismsDiffer>false</organismsDiffer>
    <experiments>3</experiments>
</comment>
<comment type="interaction">
    <interactant intactId="EBI-739895">
        <id>Q8N6Y0</id>
    </interactant>
    <interactant intactId="EBI-1047263">
        <id>O76015</id>
        <label>KRT38</label>
    </interactant>
    <organismsDiffer>false</organismsDiffer>
    <experiments>6</experiments>
</comment>
<comment type="interaction">
    <interactant intactId="EBI-739895">
        <id>Q8N6Y0</id>
    </interactant>
    <interactant intactId="EBI-10171697">
        <id>Q6A162</id>
        <label>KRT40</label>
    </interactant>
    <organismsDiffer>false</organismsDiffer>
    <experiments>3</experiments>
</comment>
<comment type="interaction">
    <interactant intactId="EBI-739895">
        <id>Q8N6Y0</id>
    </interactant>
    <interactant intactId="EBI-2952676">
        <id>Q3SY84</id>
        <label>KRT71</label>
    </interactant>
    <organismsDiffer>false</organismsDiffer>
    <experiments>3</experiments>
</comment>
<comment type="interaction">
    <interactant intactId="EBI-739895">
        <id>Q8N6Y0</id>
    </interactant>
    <interactant intactId="EBI-2949715">
        <id>O95678</id>
        <label>KRT75</label>
    </interactant>
    <organismsDiffer>false</organismsDiffer>
    <experiments>3</experiments>
</comment>
<comment type="interaction">
    <interactant intactId="EBI-739895">
        <id>Q8N6Y0</id>
    </interactant>
    <interactant intactId="EBI-2514135">
        <id>Q5XKE5</id>
        <label>KRT79</label>
    </interactant>
    <organismsDiffer>false</organismsDiffer>
    <experiments>3</experiments>
</comment>
<comment type="interaction">
    <interactant intactId="EBI-739895">
        <id>Q8N6Y0</id>
    </interactant>
    <interactant intactId="EBI-726510">
        <id>Q96BZ8</id>
        <label>LENG1</label>
    </interactant>
    <organismsDiffer>false</organismsDiffer>
    <experiments>3</experiments>
</comment>
<comment type="interaction">
    <interactant intactId="EBI-739895">
        <id>Q8N6Y0</id>
    </interactant>
    <interactant intactId="EBI-10286106">
        <id>Q96FQ7</id>
        <label>LINC00526</label>
    </interactant>
    <organismsDiffer>false</organismsDiffer>
    <experiments>3</experiments>
</comment>
<comment type="interaction">
    <interactant intactId="EBI-739895">
        <id>Q8N6Y0</id>
    </interactant>
    <interactant intactId="EBI-751857">
        <id>O15481</id>
        <label>MAGEB4</label>
    </interactant>
    <organismsDiffer>false</organismsDiffer>
    <experiments>6</experiments>
</comment>
<comment type="interaction">
    <interactant intactId="EBI-739895">
        <id>Q8N6Y0</id>
    </interactant>
    <interactant intactId="EBI-11987923">
        <id>P59942</id>
        <label>MCCD1</label>
    </interactant>
    <organismsDiffer>false</organismsDiffer>
    <experiments>3</experiments>
</comment>
<comment type="interaction">
    <interactant intactId="EBI-739895">
        <id>Q8N6Y0</id>
    </interactant>
    <interactant intactId="EBI-355924">
        <id>P33993</id>
        <label>MCM7</label>
    </interactant>
    <organismsDiffer>false</organismsDiffer>
    <experiments>3</experiments>
</comment>
<comment type="interaction">
    <interactant intactId="EBI-739895">
        <id>Q8N6Y0</id>
    </interactant>
    <interactant intactId="EBI-348259">
        <id>Q96EZ8</id>
        <label>MCRS1</label>
    </interactant>
    <organismsDiffer>false</organismsDiffer>
    <experiments>6</experiments>
</comment>
<comment type="interaction">
    <interactant intactId="EBI-739895">
        <id>Q8N6Y0</id>
    </interactant>
    <interactant intactId="EBI-394704">
        <id>Q9P086</id>
        <label>MED11</label>
    </interactant>
    <organismsDiffer>false</organismsDiffer>
    <experiments>3</experiments>
</comment>
<comment type="interaction">
    <interactant intactId="EBI-739895">
        <id>Q8N6Y0</id>
    </interactant>
    <interactant intactId="EBI-394607">
        <id>Q9NPJ6</id>
        <label>MED4</label>
    </interactant>
    <organismsDiffer>false</organismsDiffer>
    <experiments>6</experiments>
</comment>
<comment type="interaction">
    <interactant intactId="EBI-739895">
        <id>Q8N6Y0</id>
    </interactant>
    <interactant intactId="EBI-19944212">
        <id>A8MW99</id>
        <label>MEI4</label>
    </interactant>
    <organismsDiffer>false</organismsDiffer>
    <experiments>3</experiments>
</comment>
<comment type="interaction">
    <interactant intactId="EBI-739895">
        <id>Q8N6Y0</id>
    </interactant>
    <interactant intactId="EBI-10174029">
        <id>A6NJ78-4</id>
        <label>METTL15</label>
    </interactant>
    <organismsDiffer>false</organismsDiffer>
    <experiments>3</experiments>
</comment>
<comment type="interaction">
    <interactant intactId="EBI-739895">
        <id>Q8N6Y0</id>
    </interactant>
    <interactant intactId="EBI-14086479">
        <id>Q8IVT4</id>
        <label>MGC50722</label>
    </interactant>
    <organismsDiffer>false</organismsDiffer>
    <experiments>3</experiments>
</comment>
<comment type="interaction">
    <interactant intactId="EBI-739895">
        <id>Q8N6Y0</id>
    </interactant>
    <interactant intactId="EBI-2801965">
        <id>Q5JXC2</id>
        <label>MIIP</label>
    </interactant>
    <organismsDiffer>false</organismsDiffer>
    <experiments>5</experiments>
</comment>
<comment type="interaction">
    <interactant intactId="EBI-739895">
        <id>Q8N6Y0</id>
    </interactant>
    <interactant intactId="EBI-2340269">
        <id>Q13064</id>
        <label>MKRN3</label>
    </interactant>
    <organismsDiffer>false</organismsDiffer>
    <experiments>3</experiments>
</comment>
<comment type="interaction">
    <interactant intactId="EBI-739895">
        <id>Q8N6Y0</id>
    </interactant>
    <interactant intactId="EBI-743811">
        <id>Q8NEH6</id>
        <label>MNS1</label>
    </interactant>
    <organismsDiffer>false</organismsDiffer>
    <experiments>3</experiments>
</comment>
<comment type="interaction">
    <interactant intactId="EBI-739895">
        <id>Q8N6Y0</id>
    </interactant>
    <interactant intactId="EBI-1757866">
        <id>P00540</id>
        <label>MOS</label>
    </interactant>
    <organismsDiffer>false</organismsDiffer>
    <experiments>6</experiments>
</comment>
<comment type="interaction">
    <interactant intactId="EBI-739895">
        <id>Q8N6Y0</id>
    </interactant>
    <interactant intactId="EBI-1054270">
        <id>Q9Y3D9</id>
        <label>MRPS23</label>
    </interactant>
    <organismsDiffer>false</organismsDiffer>
    <experiments>3</experiments>
</comment>
<comment type="interaction">
    <interactant intactId="EBI-739895">
        <id>Q8N6Y0</id>
    </interactant>
    <interactant intactId="EBI-16436111">
        <id>P50539-4</id>
        <label>MXI1</label>
    </interactant>
    <organismsDiffer>false</organismsDiffer>
    <experiments>3</experiments>
</comment>
<comment type="interaction">
    <interactant intactId="EBI-739895">
        <id>Q8N6Y0</id>
    </interactant>
    <interactant intactId="EBI-3906629">
        <id>P15173</id>
        <label>MYOG</label>
    </interactant>
    <organismsDiffer>false</organismsDiffer>
    <experiments>5</experiments>
</comment>
<comment type="interaction">
    <interactant intactId="EBI-739895">
        <id>Q8N6Y0</id>
    </interactant>
    <interactant intactId="EBI-744402">
        <id>Q9NP98</id>
        <label>MYOZ1</label>
    </interactant>
    <organismsDiffer>false</organismsDiffer>
    <experiments>3</experiments>
</comment>
<comment type="interaction">
    <interactant intactId="EBI-739895">
        <id>Q8N6Y0</id>
    </interactant>
    <interactant intactId="EBI-10247000">
        <id>Q6IBW4-4</id>
        <label>NCAPH2</label>
    </interactant>
    <organismsDiffer>false</organismsDiffer>
    <experiments>3</experiments>
</comment>
<comment type="interaction">
    <interactant intactId="EBI-739895">
        <id>Q8N6Y0</id>
    </interactant>
    <interactant intactId="EBI-715849">
        <id>O14777</id>
        <label>NDC80</label>
    </interactant>
    <organismsDiffer>false</organismsDiffer>
    <experiments>4</experiments>
</comment>
<comment type="interaction">
    <interactant intactId="EBI-739895">
        <id>Q8N6Y0</id>
    </interactant>
    <interactant intactId="EBI-10172876">
        <id>Q7Z6G3-2</id>
        <label>NECAB2</label>
    </interactant>
    <organismsDiffer>false</organismsDiffer>
    <experiments>3</experiments>
</comment>
<comment type="interaction">
    <interactant intactId="EBI-739895">
        <id>Q8N6Y0</id>
    </interactant>
    <interactant intactId="EBI-10178578">
        <id>I6L9F6</id>
        <label>NEFL</label>
    </interactant>
    <organismsDiffer>false</organismsDiffer>
    <experiments>3</experiments>
</comment>
<comment type="interaction">
    <interactant intactId="EBI-739895">
        <id>Q8N6Y0</id>
    </interactant>
    <interactant intactId="EBI-395927">
        <id>Q9BVI4</id>
        <label>NOC4L</label>
    </interactant>
    <organismsDiffer>false</organismsDiffer>
    <experiments>2</experiments>
</comment>
<comment type="interaction">
    <interactant intactId="EBI-739895">
        <id>Q8N6Y0</id>
    </interactant>
    <interactant intactId="EBI-347978">
        <id>P37198</id>
        <label>NUP62</label>
    </interactant>
    <organismsDiffer>false</organismsDiffer>
    <experiments>3</experiments>
</comment>
<comment type="interaction">
    <interactant intactId="EBI-739895">
        <id>Q8N6Y0</id>
    </interactant>
    <interactant intactId="EBI-8466445">
        <id>A5D8V7</id>
        <label>ODAD3</label>
    </interactant>
    <organismsDiffer>false</organismsDiffer>
    <experiments>3</experiments>
</comment>
<comment type="interaction">
    <interactant intactId="EBI-739895">
        <id>Q8N6Y0</id>
    </interactant>
    <interactant intactId="EBI-536879">
        <id>O43482</id>
        <label>OIP5</label>
    </interactant>
    <organismsDiffer>false</organismsDiffer>
    <experiments>3</experiments>
</comment>
<comment type="interaction">
    <interactant intactId="EBI-739895">
        <id>Q8N6Y0</id>
    </interactant>
    <interactant intactId="EBI-3921217">
        <id>Q9HBI0</id>
        <label>PARVG</label>
    </interactant>
    <organismsDiffer>false</organismsDiffer>
    <experiments>6</experiments>
</comment>
<comment type="interaction">
    <interactant intactId="EBI-739895">
        <id>Q8N6Y0</id>
    </interactant>
    <interactant intactId="EBI-747278">
        <id>P26367</id>
        <label>PAX6</label>
    </interactant>
    <organismsDiffer>false</organismsDiffer>
    <experiments>3</experiments>
</comment>
<comment type="interaction">
    <interactant intactId="EBI-739895">
        <id>Q8N6Y0</id>
    </interactant>
    <interactant intactId="EBI-10302990">
        <id>Q9BYU1</id>
        <label>PBX4</label>
    </interactant>
    <organismsDiffer>false</organismsDiffer>
    <experiments>3</experiments>
</comment>
<comment type="interaction">
    <interactant intactId="EBI-739895">
        <id>Q8N6Y0</id>
    </interactant>
    <interactant intactId="EBI-79165">
        <id>Q9NRD5</id>
        <label>PICK1</label>
    </interactant>
    <organismsDiffer>false</organismsDiffer>
    <experiments>3</experiments>
</comment>
<comment type="interaction">
    <interactant intactId="EBI-739895">
        <id>Q8N6Y0</id>
    </interactant>
    <interactant intactId="EBI-602382">
        <id>Q16512</id>
        <label>PKN1</label>
    </interactant>
    <organismsDiffer>false</organismsDiffer>
    <experiments>3</experiments>
</comment>
<comment type="interaction">
    <interactant intactId="EBI-739895">
        <id>Q8N6Y0</id>
    </interactant>
    <interactant intactId="EBI-2692890">
        <id>Q96KN3</id>
        <label>PKNOX2</label>
    </interactant>
    <organismsDiffer>false</organismsDiffer>
    <experiments>3</experiments>
</comment>
<comment type="interaction">
    <interactant intactId="EBI-739895">
        <id>Q8N6Y0</id>
    </interactant>
    <interactant intactId="EBI-713832">
        <id>Q6P1K2</id>
        <label>PMF1</label>
    </interactant>
    <organismsDiffer>false</organismsDiffer>
    <experiments>3</experiments>
</comment>
<comment type="interaction">
    <interactant intactId="EBI-739895">
        <id>Q8N6Y0</id>
    </interactant>
    <interactant intactId="EBI-10253863">
        <id>Q6PIY2</id>
        <label>POLM</label>
    </interactant>
    <organismsDiffer>false</organismsDiffer>
    <experiments>3</experiments>
</comment>
<comment type="interaction">
    <interactant intactId="EBI-739895">
        <id>Q8N6Y0</id>
    </interactant>
    <interactant intactId="EBI-366525">
        <id>Q969H6</id>
        <label>POP5</label>
    </interactant>
    <organismsDiffer>false</organismsDiffer>
    <experiments>3</experiments>
</comment>
<comment type="interaction">
    <interactant intactId="EBI-739895">
        <id>Q8N6Y0</id>
    </interactant>
    <interactant intactId="EBI-721802">
        <id>Q9BZL4</id>
        <label>PPP1R12C</label>
    </interactant>
    <organismsDiffer>false</organismsDiffer>
    <experiments>3</experiments>
</comment>
<comment type="interaction">
    <interactant intactId="EBI-739895">
        <id>Q8N6Y0</id>
    </interactant>
    <interactant intactId="EBI-1024281">
        <id>Q15435</id>
        <label>PPP1R7</label>
    </interactant>
    <organismsDiffer>false</organismsDiffer>
    <experiments>3</experiments>
</comment>
<comment type="interaction">
    <interactant intactId="EBI-739895">
        <id>Q8N6Y0</id>
    </interactant>
    <interactant intactId="EBI-641666">
        <id>Q15172</id>
        <label>PPP2R5A</label>
    </interactant>
    <organismsDiffer>false</organismsDiffer>
    <experiments>3</experiments>
</comment>
<comment type="interaction">
    <interactant intactId="EBI-739895">
        <id>Q8N6Y0</id>
    </interactant>
    <interactant intactId="EBI-396563">
        <id>Q14738</id>
        <label>PPP2R5D</label>
    </interactant>
    <organismsDiffer>false</organismsDiffer>
    <experiments>3</experiments>
</comment>
<comment type="interaction">
    <interactant intactId="EBI-739895">
        <id>Q8N6Y0</id>
    </interactant>
    <interactant intactId="EBI-1383852">
        <id>P54646</id>
        <label>PRKAA2</label>
    </interactant>
    <organismsDiffer>false</organismsDiffer>
    <experiments>3</experiments>
</comment>
<comment type="interaction">
    <interactant intactId="EBI-739895">
        <id>Q8N6Y0</id>
    </interactant>
    <interactant intactId="EBI-12944296">
        <id>P85299-2</id>
        <label>PRR5</label>
    </interactant>
    <organismsDiffer>false</organismsDiffer>
    <experiments>3</experiments>
</comment>
<comment type="interaction">
    <interactant intactId="EBI-739895">
        <id>Q8N6Y0</id>
    </interactant>
    <interactant intactId="EBI-347462">
        <id>P47897</id>
        <label>QARS1</label>
    </interactant>
    <organismsDiffer>false</organismsDiffer>
    <experiments>3</experiments>
</comment>
<comment type="interaction">
    <interactant intactId="EBI-739895">
        <id>Q8N6Y0</id>
    </interactant>
    <interactant intactId="EBI-359444">
        <id>Q9UJF2</id>
        <label>RASAL2</label>
    </interactant>
    <organismsDiffer>false</organismsDiffer>
    <experiments>3</experiments>
</comment>
<comment type="interaction">
    <interactant intactId="EBI-739895">
        <id>Q8N6Y0</id>
    </interactant>
    <interactant intactId="EBI-1504830">
        <id>Q9P2K3-2</id>
        <label>RCOR3</label>
    </interactant>
    <organismsDiffer>false</organismsDiffer>
    <experiments>3</experiments>
</comment>
<comment type="interaction">
    <interactant intactId="EBI-739895">
        <id>Q8N6Y0</id>
    </interactant>
    <interactant intactId="EBI-10253121">
        <id>Q6P9E2</id>
        <label>RECK</label>
    </interactant>
    <organismsDiffer>false</organismsDiffer>
    <experiments>3</experiments>
</comment>
<comment type="interaction">
    <interactant intactId="EBI-739895">
        <id>Q8N6Y0</id>
    </interactant>
    <interactant intactId="EBI-10265323">
        <id>Q8N443</id>
        <label>RIBC1</label>
    </interactant>
    <organismsDiffer>false</organismsDiffer>
    <experiments>3</experiments>
</comment>
<comment type="interaction">
    <interactant intactId="EBI-739895">
        <id>Q8N6Y0</id>
    </interactant>
    <interactant intactId="EBI-726876">
        <id>Q6NUQ1</id>
        <label>RINT1</label>
    </interactant>
    <organismsDiffer>false</organismsDiffer>
    <experiments>3</experiments>
</comment>
<comment type="interaction">
    <interactant intactId="EBI-739895">
        <id>Q8N6Y0</id>
    </interactant>
    <interactant intactId="EBI-2372238">
        <id>Q5VTR2</id>
        <label>RNF20</label>
    </interactant>
    <organismsDiffer>false</organismsDiffer>
    <experiments>3</experiments>
</comment>
<comment type="interaction">
    <interactant intactId="EBI-739895">
        <id>Q8N6Y0</id>
    </interactant>
    <interactant intactId="EBI-10217913">
        <id>Q14D33</id>
        <label>RTP5</label>
    </interactant>
    <organismsDiffer>false</organismsDiffer>
    <experiments>3</experiments>
</comment>
<comment type="interaction">
    <interactant intactId="EBI-739895">
        <id>Q8N6Y0</id>
    </interactant>
    <interactant intactId="EBI-2561646">
        <id>Q86UD0</id>
        <label>SAPCD2</label>
    </interactant>
    <organismsDiffer>false</organismsDiffer>
    <experiments>3</experiments>
</comment>
<comment type="interaction">
    <interactant intactId="EBI-739895">
        <id>Q8N6Y0</id>
    </interactant>
    <interactant intactId="EBI-711613">
        <id>P21673</id>
        <label>SAT1</label>
    </interactant>
    <organismsDiffer>false</organismsDiffer>
    <experiments>3</experiments>
</comment>
<comment type="interaction">
    <interactant intactId="EBI-739895">
        <id>Q8N6Y0</id>
    </interactant>
    <interactant intactId="EBI-748391">
        <id>Q9BWG6</id>
        <label>SCNM1</label>
    </interactant>
    <organismsDiffer>false</organismsDiffer>
    <experiments>3</experiments>
</comment>
<comment type="interaction">
    <interactant intactId="EBI-739895">
        <id>Q8N6Y0</id>
    </interactant>
    <interactant intactId="EBI-12844598">
        <id>P09683</id>
        <label>SCT</label>
    </interactant>
    <organismsDiffer>false</organismsDiffer>
    <experiments>3</experiments>
</comment>
<comment type="interaction">
    <interactant intactId="EBI-739895">
        <id>Q8N6Y0</id>
    </interactant>
    <interactant intactId="EBI-10320311">
        <id>Q9UDX3</id>
        <label>SEC14L4</label>
    </interactant>
    <organismsDiffer>false</organismsDiffer>
    <experiments>6</experiments>
</comment>
<comment type="interaction">
    <interactant intactId="EBI-739895">
        <id>Q8N6Y0</id>
    </interactant>
    <interactant intactId="EBI-10303490">
        <id>Q9C0C4</id>
        <label>SEMA4C</label>
    </interactant>
    <organismsDiffer>false</organismsDiffer>
    <experiments>3</experiments>
</comment>
<comment type="interaction">
    <interactant intactId="EBI-739895">
        <id>Q8N6Y0</id>
    </interactant>
    <interactant intactId="EBI-748621">
        <id>Q9UJW9</id>
        <label>SERTAD3</label>
    </interactant>
    <organismsDiffer>false</organismsDiffer>
    <experiments>7</experiments>
</comment>
<comment type="interaction">
    <interactant intactId="EBI-739895">
        <id>Q8N6Y0</id>
    </interactant>
    <interactant intactId="EBI-10308083">
        <id>Q9H788-2</id>
        <label>SH2D4A</label>
    </interactant>
    <organismsDiffer>false</organismsDiffer>
    <experiments>3</experiments>
</comment>
<comment type="interaction">
    <interactant intactId="EBI-739895">
        <id>Q8N6Y0</id>
    </interactant>
    <interactant intactId="EBI-79084">
        <id>Q92529</id>
        <label>SHC3</label>
    </interactant>
    <organismsDiffer>false</organismsDiffer>
    <experiments>3</experiments>
</comment>
<comment type="interaction">
    <interactant intactId="EBI-739895">
        <id>Q8N6Y0</id>
    </interactant>
    <interactant intactId="EBI-358489">
        <id>Q96GM5</id>
        <label>SMARCD1</label>
    </interactant>
    <organismsDiffer>false</organismsDiffer>
    <experiments>4</experiments>
</comment>
<comment type="interaction">
    <interactant intactId="EBI-739895">
        <id>Q8N6Y0</id>
    </interactant>
    <interactant intactId="EBI-455078">
        <id>Q969G3</id>
        <label>SMARCE1</label>
    </interactant>
    <organismsDiffer>false</organismsDiffer>
    <experiments>3</experiments>
</comment>
<comment type="interaction">
    <interactant intactId="EBI-739895">
        <id>Q8N6Y0</id>
    </interactant>
    <interactant intactId="EBI-12288855">
        <id>Q5JUK2</id>
        <label>SOHLH1</label>
    </interactant>
    <organismsDiffer>false</organismsDiffer>
    <experiments>3</experiments>
</comment>
<comment type="interaction">
    <interactant intactId="EBI-739895">
        <id>Q8N6Y0</id>
    </interactant>
    <interactant intactId="EBI-742688">
        <id>Q9NZD8</id>
        <label>SPG21</label>
    </interactant>
    <organismsDiffer>false</organismsDiffer>
    <experiments>3</experiments>
</comment>
<comment type="interaction">
    <interactant intactId="EBI-739895">
        <id>Q8N6Y0</id>
    </interactant>
    <interactant intactId="EBI-12029182">
        <id>Q6ZRS2-3</id>
        <label>SRCAP</label>
    </interactant>
    <organismsDiffer>false</organismsDiffer>
    <experiments>3</experiments>
</comment>
<comment type="interaction">
    <interactant intactId="EBI-739895">
        <id>Q8N6Y0</id>
    </interactant>
    <interactant intactId="EBI-750459">
        <id>P30626</id>
        <label>SRI</label>
    </interactant>
    <organismsDiffer>false</organismsDiffer>
    <experiments>3</experiments>
</comment>
<comment type="interaction">
    <interactant intactId="EBI-739895">
        <id>Q8N6Y0</id>
    </interactant>
    <interactant intactId="EBI-714135">
        <id>O75558</id>
        <label>STX11</label>
    </interactant>
    <organismsDiffer>false</organismsDiffer>
    <experiments>3</experiments>
</comment>
<comment type="interaction">
    <interactant intactId="EBI-739895">
        <id>Q8N6Y0</id>
    </interactant>
    <interactant intactId="EBI-1049004">
        <id>P57105</id>
        <label>SYNJ2BP</label>
    </interactant>
    <organismsDiffer>false</organismsDiffer>
    <experiments>6</experiments>
</comment>
<comment type="interaction">
    <interactant intactId="EBI-739895">
        <id>Q8N6Y0</id>
    </interactant>
    <interactant intactId="EBI-745958">
        <id>Q5VWN6</id>
        <label>TASOR2</label>
    </interactant>
    <organismsDiffer>false</organismsDiffer>
    <experiments>3</experiments>
</comment>
<comment type="interaction">
    <interactant intactId="EBI-739895">
        <id>Q8N6Y0</id>
    </interactant>
    <interactant intactId="EBI-11955057">
        <id>Q8N8B7-2</id>
        <label>TCEANC</label>
    </interactant>
    <organismsDiffer>false</organismsDiffer>
    <experiments>3</experiments>
</comment>
<comment type="interaction">
    <interactant intactId="EBI-739895">
        <id>Q8N6Y0</id>
    </interactant>
    <interactant intactId="EBI-740781">
        <id>Q9BT92</id>
        <label>TCHP</label>
    </interactant>
    <organismsDiffer>false</organismsDiffer>
    <experiments>3</experiments>
</comment>
<comment type="interaction">
    <interactant intactId="EBI-739895">
        <id>Q8N6Y0</id>
    </interactant>
    <interactant intactId="EBI-10180409">
        <id>Q969V4</id>
        <label>TEKT1</label>
    </interactant>
    <organismsDiffer>false</organismsDiffer>
    <experiments>3</experiments>
</comment>
<comment type="interaction">
    <interactant intactId="EBI-739895">
        <id>Q8N6Y0</id>
    </interactant>
    <interactant intactId="EBI-2824523">
        <id>Q6YHU6</id>
        <label>THADA</label>
    </interactant>
    <organismsDiffer>false</organismsDiffer>
    <experiments>3</experiments>
</comment>
<comment type="interaction">
    <interactant intactId="EBI-739895">
        <id>Q8N6Y0</id>
    </interactant>
    <interactant intactId="EBI-1765605">
        <id>Q96FV9</id>
        <label>THOC1</label>
    </interactant>
    <organismsDiffer>false</organismsDiffer>
    <experiments>3</experiments>
</comment>
<comment type="interaction">
    <interactant intactId="EBI-739895">
        <id>Q8N6Y0</id>
    </interactant>
    <interactant intactId="EBI-1057344">
        <id>Q9Y5L4</id>
        <label>TIMM13</label>
    </interactant>
    <organismsDiffer>false</organismsDiffer>
    <experiments>3</experiments>
</comment>
<comment type="interaction">
    <interactant intactId="EBI-739895">
        <id>Q8N6Y0</id>
    </interactant>
    <interactant intactId="EBI-14115717">
        <id>Q8N7U7-2</id>
        <label>TPRX1</label>
    </interactant>
    <organismsDiffer>false</organismsDiffer>
    <experiments>3</experiments>
</comment>
<comment type="interaction">
    <interactant intactId="EBI-739895">
        <id>Q8N6Y0</id>
    </interactant>
    <interactant intactId="EBI-2130429">
        <id>Q9BYV2</id>
        <label>TRIM54</label>
    </interactant>
    <organismsDiffer>false</organismsDiffer>
    <experiments>6</experiments>
</comment>
<comment type="interaction">
    <interactant intactId="EBI-739895">
        <id>Q8N6Y0</id>
    </interactant>
    <interactant intactId="EBI-11059915">
        <id>Q8N7C3</id>
        <label>TRIML2</label>
    </interactant>
    <organismsDiffer>false</organismsDiffer>
    <experiments>3</experiments>
</comment>
<comment type="interaction">
    <interactant intactId="EBI-739895">
        <id>Q8N6Y0</id>
    </interactant>
    <interactant intactId="EBI-346882">
        <id>Q99816</id>
        <label>TSG101</label>
    </interactant>
    <organismsDiffer>false</organismsDiffer>
    <experiments>3</experiments>
</comment>
<comment type="interaction">
    <interactant intactId="EBI-739895">
        <id>Q8N6Y0</id>
    </interactant>
    <interactant intactId="EBI-9090990">
        <id>Q5W5X9-3</id>
        <label>TTC23</label>
    </interactant>
    <organismsDiffer>false</organismsDiffer>
    <experiments>3</experiments>
</comment>
<comment type="interaction">
    <interactant intactId="EBI-739895">
        <id>Q8N6Y0</id>
    </interactant>
    <interactant intactId="EBI-2851213">
        <id>Q8N5M4</id>
        <label>TTC9C</label>
    </interactant>
    <organismsDiffer>false</organismsDiffer>
    <experiments>3</experiments>
</comment>
<comment type="interaction">
    <interactant intactId="EBI-739895">
        <id>Q8N6Y0</id>
    </interactant>
    <interactant intactId="EBI-11979997">
        <id>Q6ZVT0-3</id>
        <label>TTLL10</label>
    </interactant>
    <organismsDiffer>false</organismsDiffer>
    <experiments>3</experiments>
</comment>
<comment type="interaction">
    <interactant intactId="EBI-739895">
        <id>Q8N6Y0</id>
    </interactant>
    <interactant intactId="EBI-359793">
        <id>P40222</id>
        <label>TXLNA</label>
    </interactant>
    <organismsDiffer>false</organismsDiffer>
    <experiments>6</experiments>
</comment>
<comment type="interaction">
    <interactant intactId="EBI-739895">
        <id>Q8N6Y0</id>
    </interactant>
    <interactant intactId="EBI-6116822">
        <id>Q8N3L3</id>
        <label>TXLNB</label>
    </interactant>
    <organismsDiffer>false</organismsDiffer>
    <experiments>6</experiments>
</comment>
<comment type="interaction">
    <interactant intactId="EBI-739895">
        <id>Q8N6Y0</id>
    </interactant>
    <interactant intactId="EBI-716589">
        <id>Q96B02</id>
        <label>UBE2W</label>
    </interactant>
    <organismsDiffer>false</organismsDiffer>
    <experiments>3</experiments>
</comment>
<comment type="interaction">
    <interactant intactId="EBI-739895">
        <id>Q8N6Y0</id>
    </interactant>
    <interactant intactId="EBI-10285774">
        <id>Q96FI0</id>
        <label>UBE2W</label>
    </interactant>
    <organismsDiffer>false</organismsDiffer>
    <experiments>3</experiments>
</comment>
<comment type="interaction">
    <interactant intactId="EBI-739895">
        <id>Q8N6Y0</id>
    </interactant>
    <interactant intactId="EBI-746004">
        <id>Q5T124</id>
        <label>UBXN11</label>
    </interactant>
    <organismsDiffer>false</organismsDiffer>
    <experiments>3</experiments>
</comment>
<comment type="interaction">
    <interactant intactId="EBI-739895">
        <id>Q8N6Y0</id>
    </interactant>
    <interactant intactId="EBI-11524408">
        <id>Q5T124-6</id>
        <label>UBXN11</label>
    </interactant>
    <organismsDiffer>false</organismsDiffer>
    <experiments>3</experiments>
</comment>
<comment type="interaction">
    <interactant intactId="EBI-739895">
        <id>Q8N6Y0</id>
    </interactant>
    <interactant intactId="EBI-743272">
        <id>O75604</id>
        <label>USP2</label>
    </interactant>
    <organismsDiffer>false</organismsDiffer>
    <experiments>3</experiments>
</comment>
<comment type="interaction">
    <interactant intactId="EBI-739895">
        <id>Q8N6Y0</id>
    </interactant>
    <interactant intactId="EBI-10243107">
        <id>Q548N1</id>
        <label>VPS28</label>
    </interactant>
    <organismsDiffer>false</organismsDiffer>
    <experiments>3</experiments>
</comment>
<comment type="interaction">
    <interactant intactId="EBI-739895">
        <id>Q8N6Y0</id>
    </interactant>
    <interactant intactId="EBI-727424">
        <id>Q9UK41</id>
        <label>VPS28</label>
    </interactant>
    <organismsDiffer>false</organismsDiffer>
    <experiments>6</experiments>
</comment>
<comment type="interaction">
    <interactant intactId="EBI-739895">
        <id>Q8N6Y0</id>
    </interactant>
    <interactant intactId="EBI-12287587">
        <id>B2RXF5</id>
        <label>ZBTB42</label>
    </interactant>
    <organismsDiffer>false</organismsDiffer>
    <experiments>3</experiments>
</comment>
<comment type="interaction">
    <interactant intactId="EBI-739895">
        <id>Q8N6Y0</id>
    </interactant>
    <interactant intactId="EBI-10237226">
        <id>Q15911-2</id>
        <label>ZFHX3</label>
    </interactant>
    <organismsDiffer>false</organismsDiffer>
    <experiments>3</experiments>
</comment>
<comment type="interaction">
    <interactant intactId="EBI-739895">
        <id>Q8N6Y0</id>
    </interactant>
    <interactant intactId="EBI-8656416">
        <id>Q68DK2-5</id>
        <label>ZFYVE26</label>
    </interactant>
    <organismsDiffer>false</organismsDiffer>
    <experiments>6</experiments>
</comment>
<comment type="interaction">
    <interactant intactId="EBI-739895">
        <id>Q8N6Y0</id>
    </interactant>
    <interactant intactId="EBI-740727">
        <id>Q8TAU3</id>
        <label>ZNF417</label>
    </interactant>
    <organismsDiffer>false</organismsDiffer>
    <experiments>3</experiments>
</comment>
<comment type="interaction">
    <interactant intactId="EBI-739895">
        <id>Q8N6Y0</id>
    </interactant>
    <interactant intactId="EBI-10196963">
        <id>Q6P088</id>
        <label>ZNF483</label>
    </interactant>
    <organismsDiffer>false</organismsDiffer>
    <experiments>3</experiments>
</comment>
<comment type="interaction">
    <interactant intactId="EBI-739895">
        <id>Q8N6Y0</id>
    </interactant>
    <interactant intactId="EBI-625509">
        <id>Q8N720</id>
        <label>ZNF655</label>
    </interactant>
    <organismsDiffer>false</organismsDiffer>
    <experiments>3</experiments>
</comment>
<comment type="interaction">
    <interactant intactId="EBI-739895">
        <id>Q8N6Y0</id>
    </interactant>
    <interactant intactId="EBI-16429014">
        <id>A0A0S2Z5X4</id>
        <label>ZNF688</label>
    </interactant>
    <organismsDiffer>false</organismsDiffer>
    <experiments>3</experiments>
</comment>
<comment type="interaction">
    <interactant intactId="EBI-739895">
        <id>Q8N6Y0</id>
    </interactant>
    <interactant intactId="EBI-16429989">
        <id>A0A0S2Z6P0</id>
        <label>ZNF688</label>
    </interactant>
    <organismsDiffer>false</organismsDiffer>
    <experiments>3</experiments>
</comment>
<comment type="interaction">
    <interactant intactId="EBI-739895">
        <id>Q8N6Y0</id>
    </interactant>
    <interactant intactId="EBI-9676069">
        <id>Q7L2R6</id>
        <label>ZNF765</label>
    </interactant>
    <organismsDiffer>false</organismsDiffer>
    <experiments>3</experiments>
</comment>
<comment type="interaction">
    <interactant intactId="EBI-739895">
        <id>Q8N6Y0</id>
    </interactant>
    <interactant intactId="EBI-10177989">
        <id>G4XUV3</id>
    </interactant>
    <organismsDiffer>false</organismsDiffer>
    <experiments>3</experiments>
</comment>
<comment type="interaction">
    <interactant intactId="EBI-739895">
        <id>Q8N6Y0</id>
    </interactant>
    <interactant intactId="EBI-10268244">
        <id>Q8N9J2</id>
    </interactant>
    <organismsDiffer>false</organismsDiffer>
    <experiments>3</experiments>
</comment>
<comment type="alternative products">
    <event type="alternative splicing"/>
    <isoform>
        <id>Q8N6Y0-1</id>
        <name evidence="3 4 5">1</name>
        <sequence type="displayed"/>
    </isoform>
    <isoform>
        <id>Q8N6Y0-2</id>
        <name evidence="3">2</name>
        <sequence type="described" ref="VSP_052080"/>
    </isoform>
</comment>
<comment type="tissue specificity">
    <text evidence="3">Highest level of expression in heart, and moderate to low expression in skeletal muscle, kidney, liver, small intestine, placenta and lung.</text>
</comment>
<comment type="miscellaneous">
    <molecule>Isoform 2</molecule>
    <text evidence="3">Due to the retention of an intron in the cDNA leading to a prematurate stop codon.</text>
</comment>
<comment type="similarity">
    <text evidence="7">Belongs to the MCC family.</text>
</comment>
<comment type="sequence caution" evidence="7">
    <conflict type="erroneous initiation">
        <sequence resource="EMBL-CDS" id="BAC11443"/>
    </conflict>
</comment>
<name>USBP1_HUMAN</name>